<accession>Q6ZIX2</accession>
<accession>O82426</accession>
<accession>Q0D7V5</accession>
<feature type="chain" id="PRO_0000124803" description="Cycloartenol-C-24-methyltransferase 1">
    <location>
        <begin position="1"/>
        <end position="344"/>
    </location>
</feature>
<feature type="sequence conflict" description="In Ref. 1; AAC34988." evidence="3" ref="1">
    <original>Y</original>
    <variation>YKALEY</variation>
    <location>
        <position position="299"/>
    </location>
</feature>
<protein>
    <recommendedName>
        <fullName>Cycloartenol-C-24-methyltransferase 1</fullName>
        <ecNumber>2.1.1.41</ecNumber>
    </recommendedName>
    <alternativeName>
        <fullName>24-sterol C-methyltransferase 1</fullName>
        <shortName>Sterol C-methyltransferase 1</shortName>
    </alternativeName>
</protein>
<reference key="1">
    <citation type="journal article" date="1998" name="Eur. J. Biochem.">
        <title>Two families of sterol methyltransferases are involved in the first and the second methylation steps of plant sterol biosynthesis.</title>
        <authorList>
            <person name="Bouvier-Nave P."/>
            <person name="Husselstein T."/>
            <person name="Benveniste P."/>
        </authorList>
    </citation>
    <scope>NUCLEOTIDE SEQUENCE [MRNA]</scope>
    <source>
        <strain>cv. Nipponbare</strain>
        <tissue>Root</tissue>
    </source>
</reference>
<reference key="2">
    <citation type="journal article" date="2005" name="Nature">
        <title>The map-based sequence of the rice genome.</title>
        <authorList>
            <consortium name="International rice genome sequencing project (IRGSP)"/>
        </authorList>
    </citation>
    <scope>NUCLEOTIDE SEQUENCE [LARGE SCALE GENOMIC DNA]</scope>
    <source>
        <strain>cv. Nipponbare</strain>
    </source>
</reference>
<reference key="3">
    <citation type="journal article" date="2008" name="Nucleic Acids Res.">
        <title>The rice annotation project database (RAP-DB): 2008 update.</title>
        <authorList>
            <consortium name="The rice annotation project (RAP)"/>
        </authorList>
    </citation>
    <scope>GENOME REANNOTATION</scope>
    <source>
        <strain>cv. Nipponbare</strain>
    </source>
</reference>
<reference key="4">
    <citation type="journal article" date="2013" name="Rice">
        <title>Improvement of the Oryza sativa Nipponbare reference genome using next generation sequence and optical map data.</title>
        <authorList>
            <person name="Kawahara Y."/>
            <person name="de la Bastide M."/>
            <person name="Hamilton J.P."/>
            <person name="Kanamori H."/>
            <person name="McCombie W.R."/>
            <person name="Ouyang S."/>
            <person name="Schwartz D.C."/>
            <person name="Tanaka T."/>
            <person name="Wu J."/>
            <person name="Zhou S."/>
            <person name="Childs K.L."/>
            <person name="Davidson R.M."/>
            <person name="Lin H."/>
            <person name="Quesada-Ocampo L."/>
            <person name="Vaillancourt B."/>
            <person name="Sakai H."/>
            <person name="Lee S.S."/>
            <person name="Kim J."/>
            <person name="Numa H."/>
            <person name="Itoh T."/>
            <person name="Buell C.R."/>
            <person name="Matsumoto T."/>
        </authorList>
    </citation>
    <scope>GENOME REANNOTATION</scope>
    <source>
        <strain>cv. Nipponbare</strain>
    </source>
</reference>
<keyword id="KW-0444">Lipid biosynthesis</keyword>
<keyword id="KW-0443">Lipid metabolism</keyword>
<keyword id="KW-0489">Methyltransferase</keyword>
<keyword id="KW-1185">Reference proteome</keyword>
<keyword id="KW-0949">S-adenosyl-L-methionine</keyword>
<keyword id="KW-0752">Steroid biosynthesis</keyword>
<keyword id="KW-0753">Steroid metabolism</keyword>
<keyword id="KW-0756">Sterol biosynthesis</keyword>
<keyword id="KW-1207">Sterol metabolism</keyword>
<keyword id="KW-0808">Transferase</keyword>
<name>SMT1_ORYSJ</name>
<comment type="function">
    <text evidence="1">Catalyzes the methyl transfer from S-adenosyl-methionine to the C-24 of cycloartenol to form 24-methylene cycloartenol.</text>
</comment>
<comment type="catalytic activity">
    <reaction>
        <text>zymosterol + S-adenosyl-L-methionine = fecosterol + S-adenosyl-L-homocysteine + H(+)</text>
        <dbReference type="Rhea" id="RHEA:21128"/>
        <dbReference type="ChEBI" id="CHEBI:15378"/>
        <dbReference type="ChEBI" id="CHEBI:17038"/>
        <dbReference type="ChEBI" id="CHEBI:18252"/>
        <dbReference type="ChEBI" id="CHEBI:57856"/>
        <dbReference type="ChEBI" id="CHEBI:59789"/>
        <dbReference type="EC" id="2.1.1.41"/>
    </reaction>
</comment>
<comment type="pathway">
    <text>Steroid biosynthesis; sterol biosynthesis.</text>
</comment>
<comment type="similarity">
    <text evidence="2">Belongs to the class I-like SAM-binding methyltransferase superfamily. Erg6/SMT family.</text>
</comment>
<gene>
    <name type="primary">Smt1-1</name>
    <name type="ordered locus">Os07g0206700</name>
    <name type="ordered locus">LOC_Os07g10600</name>
    <name type="ORF">OJ1119_B04.19-1</name>
</gene>
<dbReference type="EC" id="2.1.1.41"/>
<dbReference type="EMBL" id="AF042332">
    <property type="protein sequence ID" value="AAC34988.1"/>
    <property type="molecule type" value="mRNA"/>
</dbReference>
<dbReference type="EMBL" id="AP003943">
    <property type="protein sequence ID" value="BAC83238.1"/>
    <property type="molecule type" value="Genomic_DNA"/>
</dbReference>
<dbReference type="EMBL" id="AP008213">
    <property type="protein sequence ID" value="BAF21068.1"/>
    <property type="molecule type" value="Genomic_DNA"/>
</dbReference>
<dbReference type="EMBL" id="AP014963">
    <property type="protein sequence ID" value="BAT00552.1"/>
    <property type="molecule type" value="Genomic_DNA"/>
</dbReference>
<dbReference type="SMR" id="Q6ZIX2"/>
<dbReference type="FunCoup" id="Q6ZIX2">
    <property type="interactions" value="1647"/>
</dbReference>
<dbReference type="IntAct" id="Q6ZIX2">
    <property type="interactions" value="2"/>
</dbReference>
<dbReference type="STRING" id="39947.Q6ZIX2"/>
<dbReference type="PaxDb" id="39947-Q6ZIX2"/>
<dbReference type="EnsemblPlants" id="Os07t0206700-01">
    <property type="protein sequence ID" value="Os07t0206700-01"/>
    <property type="gene ID" value="Os07g0206700"/>
</dbReference>
<dbReference type="Gramene" id="Os07t0206700-01">
    <property type="protein sequence ID" value="Os07t0206700-01"/>
    <property type="gene ID" value="Os07g0206700"/>
</dbReference>
<dbReference type="KEGG" id="dosa:Os07g0206700"/>
<dbReference type="eggNOG" id="KOG1269">
    <property type="taxonomic scope" value="Eukaryota"/>
</dbReference>
<dbReference type="InParanoid" id="Q6ZIX2"/>
<dbReference type="OMA" id="AFNKAMH"/>
<dbReference type="BioCyc" id="MetaCyc:MONOMER-7706"/>
<dbReference type="PlantReactome" id="R-OSA-1119370">
    <property type="pathway name" value="Sterol biosynthesis"/>
</dbReference>
<dbReference type="UniPathway" id="UPA00766"/>
<dbReference type="Proteomes" id="UP000000763">
    <property type="component" value="Chromosome 7"/>
</dbReference>
<dbReference type="Proteomes" id="UP000059680">
    <property type="component" value="Chromosome 7"/>
</dbReference>
<dbReference type="ExpressionAtlas" id="Q6ZIX2">
    <property type="expression patterns" value="baseline and differential"/>
</dbReference>
<dbReference type="GO" id="GO:0005783">
    <property type="term" value="C:endoplasmic reticulum"/>
    <property type="evidence" value="ECO:0000318"/>
    <property type="project" value="GO_Central"/>
</dbReference>
<dbReference type="GO" id="GO:0003838">
    <property type="term" value="F:sterol 24-C-methyltransferase activity"/>
    <property type="evidence" value="ECO:0000318"/>
    <property type="project" value="GO_Central"/>
</dbReference>
<dbReference type="GO" id="GO:0032259">
    <property type="term" value="P:methylation"/>
    <property type="evidence" value="ECO:0007669"/>
    <property type="project" value="UniProtKB-KW"/>
</dbReference>
<dbReference type="GO" id="GO:0016126">
    <property type="term" value="P:sterol biosynthetic process"/>
    <property type="evidence" value="ECO:0000318"/>
    <property type="project" value="GO_Central"/>
</dbReference>
<dbReference type="CDD" id="cd02440">
    <property type="entry name" value="AdoMet_MTases"/>
    <property type="match status" value="1"/>
</dbReference>
<dbReference type="FunFam" id="3.40.50.150:FF:000161">
    <property type="entry name" value="Methyltransferase"/>
    <property type="match status" value="1"/>
</dbReference>
<dbReference type="Gene3D" id="3.40.50.150">
    <property type="entry name" value="Vaccinia Virus protein VP39"/>
    <property type="match status" value="1"/>
</dbReference>
<dbReference type="InterPro" id="IPR050447">
    <property type="entry name" value="Erg6_SMT_methyltransf"/>
</dbReference>
<dbReference type="InterPro" id="IPR013216">
    <property type="entry name" value="Methyltransf_11"/>
</dbReference>
<dbReference type="InterPro" id="IPR030384">
    <property type="entry name" value="MeTrfase_SMT"/>
</dbReference>
<dbReference type="InterPro" id="IPR029063">
    <property type="entry name" value="SAM-dependent_MTases_sf"/>
</dbReference>
<dbReference type="InterPro" id="IPR013705">
    <property type="entry name" value="Sterol_MeTrfase_C"/>
</dbReference>
<dbReference type="PANTHER" id="PTHR44068:SF1">
    <property type="entry name" value="HYPOTHETICAL LOC100005854"/>
    <property type="match status" value="1"/>
</dbReference>
<dbReference type="PANTHER" id="PTHR44068">
    <property type="entry name" value="ZGC:194242"/>
    <property type="match status" value="1"/>
</dbReference>
<dbReference type="Pfam" id="PF08241">
    <property type="entry name" value="Methyltransf_11"/>
    <property type="match status" value="1"/>
</dbReference>
<dbReference type="Pfam" id="PF08498">
    <property type="entry name" value="Sterol_MT_C"/>
    <property type="match status" value="1"/>
</dbReference>
<dbReference type="SUPFAM" id="SSF53335">
    <property type="entry name" value="S-adenosyl-L-methionine-dependent methyltransferases"/>
    <property type="match status" value="1"/>
</dbReference>
<dbReference type="PROSITE" id="PS51685">
    <property type="entry name" value="SAM_MT_ERG6_SMT"/>
    <property type="match status" value="1"/>
</dbReference>
<organism>
    <name type="scientific">Oryza sativa subsp. japonica</name>
    <name type="common">Rice</name>
    <dbReference type="NCBI Taxonomy" id="39947"/>
    <lineage>
        <taxon>Eukaryota</taxon>
        <taxon>Viridiplantae</taxon>
        <taxon>Streptophyta</taxon>
        <taxon>Embryophyta</taxon>
        <taxon>Tracheophyta</taxon>
        <taxon>Spermatophyta</taxon>
        <taxon>Magnoliopsida</taxon>
        <taxon>Liliopsida</taxon>
        <taxon>Poales</taxon>
        <taxon>Poaceae</taxon>
        <taxon>BOP clade</taxon>
        <taxon>Oryzoideae</taxon>
        <taxon>Oryzeae</taxon>
        <taxon>Oryzinae</taxon>
        <taxon>Oryza</taxon>
        <taxon>Oryza sativa</taxon>
    </lineage>
</organism>
<evidence type="ECO:0000250" key="1"/>
<evidence type="ECO:0000255" key="2">
    <source>
        <dbReference type="PROSITE-ProRule" id="PRU01022"/>
    </source>
</evidence>
<evidence type="ECO:0000305" key="3"/>
<sequence>MSRSGAMDLASGLGGKITKDEVKSAVDEYEKYHGYYGGKEEARKSNYTDMVNKYYDLATSFYEYGWGESFHFAHRWNGESLRESIKRHEHFLALQLGVKPGMKVLDVGCGIGGPLREIAKFSLASVTGLNNNEYQITRGKELNRVAGVSGTCDFVKADFMKMPFSDNTFDAVYAIEATCHAPDPVGCYKEIYRVLKPGQCFAVYEWCITDHYEPNNATHKRIKDEIELGNGLPDIRSTQQCLQAAKDAGFEVIWDKDLAEDSPVPWYLPLDPSRFSLSSFRLTTVGRAITRTMVKALEYVGLAPQGSERVSNFLEKAAEGLVEGGKKEIFTPMYFFLVRKPISE</sequence>
<proteinExistence type="evidence at transcript level"/>